<organism>
    <name type="scientific">Streptococcus pneumoniae serotype 2 (strain D39 / NCTC 7466)</name>
    <dbReference type="NCBI Taxonomy" id="373153"/>
    <lineage>
        <taxon>Bacteria</taxon>
        <taxon>Bacillati</taxon>
        <taxon>Bacillota</taxon>
        <taxon>Bacilli</taxon>
        <taxon>Lactobacillales</taxon>
        <taxon>Streptococcaceae</taxon>
        <taxon>Streptococcus</taxon>
    </lineage>
</organism>
<keyword id="KW-1185">Reference proteome</keyword>
<keyword id="KW-0687">Ribonucleoprotein</keyword>
<keyword id="KW-0689">Ribosomal protein</keyword>
<keyword id="KW-0694">RNA-binding</keyword>
<keyword id="KW-0699">rRNA-binding</keyword>
<dbReference type="EMBL" id="CP000410">
    <property type="protein sequence ID" value="ABJ54607.1"/>
    <property type="molecule type" value="Genomic_DNA"/>
</dbReference>
<dbReference type="RefSeq" id="WP_001085703.1">
    <property type="nucleotide sequence ID" value="NZ_JAMLJR010000002.1"/>
</dbReference>
<dbReference type="SMR" id="Q04MM3"/>
<dbReference type="PaxDb" id="373153-SPD_0206"/>
<dbReference type="GeneID" id="45652296"/>
<dbReference type="KEGG" id="spd:SPD_0206"/>
<dbReference type="eggNOG" id="COG0199">
    <property type="taxonomic scope" value="Bacteria"/>
</dbReference>
<dbReference type="HOGENOM" id="CLU_139869_0_0_9"/>
<dbReference type="BioCyc" id="SPNE373153:G1G6V-229-MONOMER"/>
<dbReference type="Proteomes" id="UP000001452">
    <property type="component" value="Chromosome"/>
</dbReference>
<dbReference type="GO" id="GO:0005737">
    <property type="term" value="C:cytoplasm"/>
    <property type="evidence" value="ECO:0007669"/>
    <property type="project" value="UniProtKB-ARBA"/>
</dbReference>
<dbReference type="GO" id="GO:0015935">
    <property type="term" value="C:small ribosomal subunit"/>
    <property type="evidence" value="ECO:0007669"/>
    <property type="project" value="TreeGrafter"/>
</dbReference>
<dbReference type="GO" id="GO:0019843">
    <property type="term" value="F:rRNA binding"/>
    <property type="evidence" value="ECO:0007669"/>
    <property type="project" value="UniProtKB-UniRule"/>
</dbReference>
<dbReference type="GO" id="GO:0003735">
    <property type="term" value="F:structural constituent of ribosome"/>
    <property type="evidence" value="ECO:0007669"/>
    <property type="project" value="InterPro"/>
</dbReference>
<dbReference type="GO" id="GO:0006412">
    <property type="term" value="P:translation"/>
    <property type="evidence" value="ECO:0007669"/>
    <property type="project" value="UniProtKB-UniRule"/>
</dbReference>
<dbReference type="FunFam" id="4.10.830.10:FF:000003">
    <property type="entry name" value="30S ribosomal protein S14"/>
    <property type="match status" value="1"/>
</dbReference>
<dbReference type="Gene3D" id="4.10.830.10">
    <property type="entry name" value="30s Ribosomal Protein S14, Chain N"/>
    <property type="match status" value="1"/>
</dbReference>
<dbReference type="HAMAP" id="MF_00537">
    <property type="entry name" value="Ribosomal_uS14_1"/>
    <property type="match status" value="1"/>
</dbReference>
<dbReference type="InterPro" id="IPR001209">
    <property type="entry name" value="Ribosomal_uS14"/>
</dbReference>
<dbReference type="InterPro" id="IPR023036">
    <property type="entry name" value="Ribosomal_uS14_bac/plastid"/>
</dbReference>
<dbReference type="InterPro" id="IPR018271">
    <property type="entry name" value="Ribosomal_uS14_CS"/>
</dbReference>
<dbReference type="InterPro" id="IPR043140">
    <property type="entry name" value="Ribosomal_uS14_sf"/>
</dbReference>
<dbReference type="NCBIfam" id="NF006477">
    <property type="entry name" value="PRK08881.1"/>
    <property type="match status" value="1"/>
</dbReference>
<dbReference type="PANTHER" id="PTHR19836">
    <property type="entry name" value="30S RIBOSOMAL PROTEIN S14"/>
    <property type="match status" value="1"/>
</dbReference>
<dbReference type="PANTHER" id="PTHR19836:SF19">
    <property type="entry name" value="SMALL RIBOSOMAL SUBUNIT PROTEIN US14M"/>
    <property type="match status" value="1"/>
</dbReference>
<dbReference type="Pfam" id="PF00253">
    <property type="entry name" value="Ribosomal_S14"/>
    <property type="match status" value="1"/>
</dbReference>
<dbReference type="SUPFAM" id="SSF57716">
    <property type="entry name" value="Glucocorticoid receptor-like (DNA-binding domain)"/>
    <property type="match status" value="1"/>
</dbReference>
<dbReference type="PROSITE" id="PS00527">
    <property type="entry name" value="RIBOSOMAL_S14"/>
    <property type="match status" value="1"/>
</dbReference>
<gene>
    <name evidence="1" type="primary">rpsN</name>
    <name type="ordered locus">SPD_0206</name>
</gene>
<protein>
    <recommendedName>
        <fullName evidence="1">Small ribosomal subunit protein uS14</fullName>
    </recommendedName>
    <alternativeName>
        <fullName evidence="2">30S ribosomal protein S14</fullName>
    </alternativeName>
</protein>
<feature type="chain" id="PRO_1000128605" description="Small ribosomal subunit protein uS14">
    <location>
        <begin position="1"/>
        <end position="89"/>
    </location>
</feature>
<evidence type="ECO:0000255" key="1">
    <source>
        <dbReference type="HAMAP-Rule" id="MF_00537"/>
    </source>
</evidence>
<evidence type="ECO:0000305" key="2"/>
<name>RS14_STRP2</name>
<sequence>MAKKSMVAREAKRQKIVDRYAEKRAALKAAGDYEGLSKLPRNASPTRLHNRCRVTGRPHSVYRKFGLSRIAFRELAHKGQIPGVTKASW</sequence>
<reference key="1">
    <citation type="journal article" date="2007" name="J. Bacteriol.">
        <title>Genome sequence of Avery's virulent serotype 2 strain D39 of Streptococcus pneumoniae and comparison with that of unencapsulated laboratory strain R6.</title>
        <authorList>
            <person name="Lanie J.A."/>
            <person name="Ng W.-L."/>
            <person name="Kazmierczak K.M."/>
            <person name="Andrzejewski T.M."/>
            <person name="Davidsen T.M."/>
            <person name="Wayne K.J."/>
            <person name="Tettelin H."/>
            <person name="Glass J.I."/>
            <person name="Winkler M.E."/>
        </authorList>
    </citation>
    <scope>NUCLEOTIDE SEQUENCE [LARGE SCALE GENOMIC DNA]</scope>
    <source>
        <strain>D39 / NCTC 7466</strain>
    </source>
</reference>
<comment type="function">
    <text evidence="1">Binds 16S rRNA, required for the assembly of 30S particles and may also be responsible for determining the conformation of the 16S rRNA at the A site.</text>
</comment>
<comment type="subunit">
    <text evidence="1">Part of the 30S ribosomal subunit. Contacts proteins S3 and S10.</text>
</comment>
<comment type="similarity">
    <text evidence="1">Belongs to the universal ribosomal protein uS14 family.</text>
</comment>
<proteinExistence type="inferred from homology"/>
<accession>Q04MM3</accession>